<dbReference type="EMBL" id="AP008232">
    <property type="protein sequence ID" value="BAE73928.1"/>
    <property type="molecule type" value="Genomic_DNA"/>
</dbReference>
<dbReference type="RefSeq" id="WP_011410406.1">
    <property type="nucleotide sequence ID" value="NC_007712.1"/>
</dbReference>
<dbReference type="SMR" id="Q2NV97"/>
<dbReference type="STRING" id="343509.SG0653"/>
<dbReference type="KEGG" id="sgl:SG0653"/>
<dbReference type="eggNOG" id="COG0781">
    <property type="taxonomic scope" value="Bacteria"/>
</dbReference>
<dbReference type="HOGENOM" id="CLU_087843_4_1_6"/>
<dbReference type="OrthoDB" id="9789556at2"/>
<dbReference type="Proteomes" id="UP000001932">
    <property type="component" value="Chromosome"/>
</dbReference>
<dbReference type="GO" id="GO:0005829">
    <property type="term" value="C:cytosol"/>
    <property type="evidence" value="ECO:0007669"/>
    <property type="project" value="TreeGrafter"/>
</dbReference>
<dbReference type="GO" id="GO:0003723">
    <property type="term" value="F:RNA binding"/>
    <property type="evidence" value="ECO:0007669"/>
    <property type="project" value="UniProtKB-UniRule"/>
</dbReference>
<dbReference type="GO" id="GO:0006353">
    <property type="term" value="P:DNA-templated transcription termination"/>
    <property type="evidence" value="ECO:0007669"/>
    <property type="project" value="UniProtKB-UniRule"/>
</dbReference>
<dbReference type="GO" id="GO:0031564">
    <property type="term" value="P:transcription antitermination"/>
    <property type="evidence" value="ECO:0007669"/>
    <property type="project" value="UniProtKB-KW"/>
</dbReference>
<dbReference type="CDD" id="cd00619">
    <property type="entry name" value="Terminator_NusB"/>
    <property type="match status" value="1"/>
</dbReference>
<dbReference type="FunFam" id="1.10.940.10:FF:000001">
    <property type="entry name" value="Transcription antitermination factor NusB"/>
    <property type="match status" value="1"/>
</dbReference>
<dbReference type="Gene3D" id="1.10.940.10">
    <property type="entry name" value="NusB-like"/>
    <property type="match status" value="1"/>
</dbReference>
<dbReference type="HAMAP" id="MF_00073">
    <property type="entry name" value="NusB"/>
    <property type="match status" value="1"/>
</dbReference>
<dbReference type="InterPro" id="IPR035926">
    <property type="entry name" value="NusB-like_sf"/>
</dbReference>
<dbReference type="InterPro" id="IPR011605">
    <property type="entry name" value="NusB_fam"/>
</dbReference>
<dbReference type="InterPro" id="IPR006027">
    <property type="entry name" value="NusB_RsmB_TIM44"/>
</dbReference>
<dbReference type="NCBIfam" id="TIGR01951">
    <property type="entry name" value="nusB"/>
    <property type="match status" value="1"/>
</dbReference>
<dbReference type="PANTHER" id="PTHR11078:SF3">
    <property type="entry name" value="ANTITERMINATION NUSB DOMAIN-CONTAINING PROTEIN"/>
    <property type="match status" value="1"/>
</dbReference>
<dbReference type="PANTHER" id="PTHR11078">
    <property type="entry name" value="N UTILIZATION SUBSTANCE PROTEIN B-RELATED"/>
    <property type="match status" value="1"/>
</dbReference>
<dbReference type="Pfam" id="PF01029">
    <property type="entry name" value="NusB"/>
    <property type="match status" value="1"/>
</dbReference>
<dbReference type="SUPFAM" id="SSF48013">
    <property type="entry name" value="NusB-like"/>
    <property type="match status" value="1"/>
</dbReference>
<keyword id="KW-0694">RNA-binding</keyword>
<keyword id="KW-0804">Transcription</keyword>
<keyword id="KW-0889">Transcription antitermination</keyword>
<keyword id="KW-0805">Transcription regulation</keyword>
<reference key="1">
    <citation type="journal article" date="2006" name="Genome Res.">
        <title>Massive genome erosion and functional adaptations provide insights into the symbiotic lifestyle of Sodalis glossinidius in the tsetse host.</title>
        <authorList>
            <person name="Toh H."/>
            <person name="Weiss B.L."/>
            <person name="Perkin S.A.H."/>
            <person name="Yamashita A."/>
            <person name="Oshima K."/>
            <person name="Hattori M."/>
            <person name="Aksoy S."/>
        </authorList>
    </citation>
    <scope>NUCLEOTIDE SEQUENCE [LARGE SCALE GENOMIC DNA]</scope>
    <source>
        <strain>morsitans</strain>
    </source>
</reference>
<evidence type="ECO:0000255" key="1">
    <source>
        <dbReference type="HAMAP-Rule" id="MF_00073"/>
    </source>
</evidence>
<protein>
    <recommendedName>
        <fullName evidence="1">Transcription antitermination protein NusB</fullName>
    </recommendedName>
    <alternativeName>
        <fullName evidence="1">Antitermination factor NusB</fullName>
    </alternativeName>
</protein>
<sequence length="139" mass="15786">MKPAARRRARECAVQALYSWQLSHNDIADIEVQFLAEQDTSDVDVAYFRDLYAGAATNAQELDKLMAPYLSRQLEELGHVERAVLRIALFELSKRQDVPYKVAINEAIELAKTFGAEESHKFINGVLDKVAPQIRPNRK</sequence>
<organism>
    <name type="scientific">Sodalis glossinidius (strain morsitans)</name>
    <dbReference type="NCBI Taxonomy" id="343509"/>
    <lineage>
        <taxon>Bacteria</taxon>
        <taxon>Pseudomonadati</taxon>
        <taxon>Pseudomonadota</taxon>
        <taxon>Gammaproteobacteria</taxon>
        <taxon>Enterobacterales</taxon>
        <taxon>Bruguierivoracaceae</taxon>
        <taxon>Sodalis</taxon>
    </lineage>
</organism>
<name>NUSB_SODGM</name>
<gene>
    <name evidence="1" type="primary">nusB</name>
    <name type="ordered locus">SG0653</name>
</gene>
<feature type="chain" id="PRO_0000265595" description="Transcription antitermination protein NusB">
    <location>
        <begin position="1"/>
        <end position="139"/>
    </location>
</feature>
<proteinExistence type="inferred from homology"/>
<accession>Q2NV97</accession>
<comment type="function">
    <text evidence="1">Involved in transcription antitermination. Required for transcription of ribosomal RNA (rRNA) genes. Binds specifically to the boxA antiterminator sequence of the ribosomal RNA (rrn) operons.</text>
</comment>
<comment type="similarity">
    <text evidence="1">Belongs to the NusB family.</text>
</comment>